<protein>
    <recommendedName>
        <fullName>Ubiquitin-like modifier-activating enzyme atg7</fullName>
    </recommendedName>
    <alternativeName>
        <fullName>ATG12-activating enzyme E1 atg7</fullName>
    </alternativeName>
    <alternativeName>
        <fullName>Autophagy-related protein 7</fullName>
    </alternativeName>
</protein>
<evidence type="ECO:0000250" key="1"/>
<evidence type="ECO:0000269" key="2">
    <source>
    </source>
</evidence>
<evidence type="ECO:0000269" key="3">
    <source>
    </source>
</evidence>
<evidence type="ECO:0000269" key="4">
    <source>
    </source>
</evidence>
<evidence type="ECO:0000269" key="5">
    <source>
    </source>
</evidence>
<evidence type="ECO:0000305" key="6"/>
<comment type="function">
    <text evidence="1 3">E1-like activating enzyme involved in the 2 ubiquitin-like systems required for cytoplasm to vacuole transport (Cvt) and autophagy. Activates atg12 for its conjugation with atg5 and atg8 for its conjugation with phosphatidylethanolamine. Both systems are needed for the atg8 association to Cvt vesicles and autophagosomes membranes. Autophagy is essential for maintenance of amino acid levels and protein synthesis under nitrogen starvation. Required for selective autophagic degradation of the nucleus (nucleophagy) as well as for mitophagy which contributes to regulate mitochondrial quantity and quality by eliminating the mitochondria to a basal level to fulfill cellular energy requirements and preventing excess ROS production. Plays a role in the regulation of filamentous growth and chronological longevity (By similarity). Plays a role in meiosis and sporulation.</text>
</comment>
<comment type="subunit">
    <text evidence="1">Homodimer.</text>
</comment>
<comment type="subcellular location">
    <subcellularLocation>
        <location evidence="2">Cytoplasm</location>
    </subcellularLocation>
    <subcellularLocation>
        <location evidence="2">Nucleus</location>
    </subcellularLocation>
    <subcellularLocation>
        <location evidence="1">Preautophagosomal structure membrane</location>
        <topology evidence="1">Peripheral membrane protein</topology>
    </subcellularLocation>
</comment>
<comment type="domain">
    <text evidence="1">The GxGxxG motif is important for the function, possibly through binding with ATP.</text>
</comment>
<comment type="disruption phenotype">
    <text evidence="4 5">Impairs atg8-processing (PubMed:23950735). Sensitive to nitrogen starvation (PubMed:33138913).</text>
</comment>
<comment type="similarity">
    <text evidence="6">Belongs to the ATG7 family.</text>
</comment>
<accession>O43069</accession>
<feature type="chain" id="PRO_0000212820" description="Ubiquitin-like modifier-activating enzyme atg7">
    <location>
        <begin position="1"/>
        <end position="649"/>
    </location>
</feature>
<feature type="short sequence motif" description="GXGXXG motif">
    <location>
        <begin position="342"/>
        <end position="347"/>
    </location>
</feature>
<feature type="active site" description="Glycyl thioester intermediate" evidence="1">
    <location>
        <position position="521"/>
    </location>
</feature>
<dbReference type="EMBL" id="CU329671">
    <property type="protein sequence ID" value="CAA17048.1"/>
    <property type="molecule type" value="Genomic_DNA"/>
</dbReference>
<dbReference type="PIR" id="T40646">
    <property type="entry name" value="T40646"/>
</dbReference>
<dbReference type="RefSeq" id="NP_596084.1">
    <property type="nucleotide sequence ID" value="NM_001021998.2"/>
</dbReference>
<dbReference type="SMR" id="O43069"/>
<dbReference type="BioGRID" id="277309">
    <property type="interactions" value="16"/>
</dbReference>
<dbReference type="FunCoup" id="O43069">
    <property type="interactions" value="474"/>
</dbReference>
<dbReference type="STRING" id="284812.O43069"/>
<dbReference type="iPTMnet" id="O43069"/>
<dbReference type="PaxDb" id="4896-SPBC6B1.05c.1"/>
<dbReference type="EnsemblFungi" id="SPBC6B1.05c.1">
    <property type="protein sequence ID" value="SPBC6B1.05c.1:pep"/>
    <property type="gene ID" value="SPBC6B1.05c"/>
</dbReference>
<dbReference type="GeneID" id="2540790"/>
<dbReference type="KEGG" id="spo:2540790"/>
<dbReference type="PomBase" id="SPBC6B1.05c">
    <property type="gene designation" value="atg7"/>
</dbReference>
<dbReference type="VEuPathDB" id="FungiDB:SPBC6B1.05c"/>
<dbReference type="eggNOG" id="KOG2337">
    <property type="taxonomic scope" value="Eukaryota"/>
</dbReference>
<dbReference type="HOGENOM" id="CLU_012998_2_1_1"/>
<dbReference type="InParanoid" id="O43069"/>
<dbReference type="OMA" id="RQIWDAI"/>
<dbReference type="PhylomeDB" id="O43069"/>
<dbReference type="Reactome" id="R-SPO-1632852">
    <property type="pathway name" value="Macroautophagy"/>
</dbReference>
<dbReference type="Reactome" id="R-SPO-6798695">
    <property type="pathway name" value="Neutrophil degranulation"/>
</dbReference>
<dbReference type="Reactome" id="R-SPO-983168">
    <property type="pathway name" value="Antigen processing: Ubiquitination &amp; Proteasome degradation"/>
</dbReference>
<dbReference type="PRO" id="PR:O43069"/>
<dbReference type="Proteomes" id="UP000002485">
    <property type="component" value="Chromosome II"/>
</dbReference>
<dbReference type="GO" id="GO:0005737">
    <property type="term" value="C:cytoplasm"/>
    <property type="evidence" value="ECO:0000318"/>
    <property type="project" value="GO_Central"/>
</dbReference>
<dbReference type="GO" id="GO:0005829">
    <property type="term" value="C:cytosol"/>
    <property type="evidence" value="ECO:0007005"/>
    <property type="project" value="PomBase"/>
</dbReference>
<dbReference type="GO" id="GO:0005634">
    <property type="term" value="C:nucleus"/>
    <property type="evidence" value="ECO:0007005"/>
    <property type="project" value="PomBase"/>
</dbReference>
<dbReference type="GO" id="GO:0000407">
    <property type="term" value="C:phagophore assembly site"/>
    <property type="evidence" value="ECO:0000318"/>
    <property type="project" value="GO_Central"/>
</dbReference>
<dbReference type="GO" id="GO:0034045">
    <property type="term" value="C:phagophore assembly site membrane"/>
    <property type="evidence" value="ECO:0007669"/>
    <property type="project" value="UniProtKB-SubCell"/>
</dbReference>
<dbReference type="GO" id="GO:0019778">
    <property type="term" value="F:Atg12 activating enzyme activity"/>
    <property type="evidence" value="ECO:0000318"/>
    <property type="project" value="GO_Central"/>
</dbReference>
<dbReference type="GO" id="GO:0019779">
    <property type="term" value="F:Atg8 activating enzyme activity"/>
    <property type="evidence" value="ECO:0000318"/>
    <property type="project" value="GO_Central"/>
</dbReference>
<dbReference type="GO" id="GO:0016887">
    <property type="term" value="F:ATP hydrolysis activity"/>
    <property type="evidence" value="ECO:0000305"/>
    <property type="project" value="PomBase"/>
</dbReference>
<dbReference type="GO" id="GO:0000045">
    <property type="term" value="P:autophagosome assembly"/>
    <property type="evidence" value="ECO:0000318"/>
    <property type="project" value="GO_Central"/>
</dbReference>
<dbReference type="GO" id="GO:0006995">
    <property type="term" value="P:cellular response to nitrogen starvation"/>
    <property type="evidence" value="ECO:0000318"/>
    <property type="project" value="GO_Central"/>
</dbReference>
<dbReference type="GO" id="GO:0016236">
    <property type="term" value="P:macroautophagy"/>
    <property type="evidence" value="ECO:0000315"/>
    <property type="project" value="PomBase"/>
</dbReference>
<dbReference type="GO" id="GO:0000423">
    <property type="term" value="P:mitophagy"/>
    <property type="evidence" value="ECO:0000318"/>
    <property type="project" value="GO_Central"/>
</dbReference>
<dbReference type="GO" id="GO:0034727">
    <property type="term" value="P:piecemeal microautophagy of the nucleus"/>
    <property type="evidence" value="ECO:0000318"/>
    <property type="project" value="GO_Central"/>
</dbReference>
<dbReference type="GO" id="GO:0032446">
    <property type="term" value="P:protein modification by small protein conjugation"/>
    <property type="evidence" value="ECO:0000318"/>
    <property type="project" value="GO_Central"/>
</dbReference>
<dbReference type="GO" id="GO:0015031">
    <property type="term" value="P:protein transport"/>
    <property type="evidence" value="ECO:0007669"/>
    <property type="project" value="UniProtKB-KW"/>
</dbReference>
<dbReference type="CDD" id="cd01486">
    <property type="entry name" value="Apg7"/>
    <property type="match status" value="1"/>
</dbReference>
<dbReference type="FunFam" id="3.40.50.720:FF:000395">
    <property type="entry name" value="ubiquitin-like modifier-activating enzyme ATG7"/>
    <property type="match status" value="1"/>
</dbReference>
<dbReference type="Gene3D" id="3.40.50.720">
    <property type="entry name" value="NAD(P)-binding Rossmann-like Domain"/>
    <property type="match status" value="1"/>
</dbReference>
<dbReference type="Gene3D" id="3.40.140.100">
    <property type="entry name" value="Ubiquitin-like modifier-activating enzyme ATG7 C-terminal domain"/>
    <property type="match status" value="1"/>
</dbReference>
<dbReference type="Gene3D" id="3.40.140.70">
    <property type="entry name" value="Ubiquitin-like modifier-activating enzyme ATG7 N-terminal domain"/>
    <property type="match status" value="1"/>
</dbReference>
<dbReference type="InterPro" id="IPR006285">
    <property type="entry name" value="Atg7"/>
</dbReference>
<dbReference type="InterPro" id="IPR032197">
    <property type="entry name" value="Atg7_N"/>
</dbReference>
<dbReference type="InterPro" id="IPR042522">
    <property type="entry name" value="Atg7_N_1"/>
</dbReference>
<dbReference type="InterPro" id="IPR042523">
    <property type="entry name" value="Atg7_N_2"/>
</dbReference>
<dbReference type="InterPro" id="IPR045886">
    <property type="entry name" value="ThiF/MoeB/HesA"/>
</dbReference>
<dbReference type="InterPro" id="IPR000594">
    <property type="entry name" value="ThiF_NAD_FAD-bd"/>
</dbReference>
<dbReference type="InterPro" id="IPR035985">
    <property type="entry name" value="Ubiquitin-activating_enz"/>
</dbReference>
<dbReference type="NCBIfam" id="TIGR01381">
    <property type="entry name" value="E1_like_apg7"/>
    <property type="match status" value="1"/>
</dbReference>
<dbReference type="PANTHER" id="PTHR10953">
    <property type="entry name" value="UBIQUITIN-ACTIVATING ENZYME E1"/>
    <property type="match status" value="1"/>
</dbReference>
<dbReference type="PANTHER" id="PTHR10953:SF3">
    <property type="entry name" value="UBIQUITIN-LIKE MODIFIER-ACTIVATING ENZYME ATG7"/>
    <property type="match status" value="1"/>
</dbReference>
<dbReference type="Pfam" id="PF16420">
    <property type="entry name" value="ATG7_N"/>
    <property type="match status" value="1"/>
</dbReference>
<dbReference type="Pfam" id="PF00899">
    <property type="entry name" value="ThiF"/>
    <property type="match status" value="1"/>
</dbReference>
<dbReference type="SUPFAM" id="SSF69572">
    <property type="entry name" value="Activating enzymes of the ubiquitin-like proteins"/>
    <property type="match status" value="1"/>
</dbReference>
<organism>
    <name type="scientific">Schizosaccharomyces pombe (strain 972 / ATCC 24843)</name>
    <name type="common">Fission yeast</name>
    <dbReference type="NCBI Taxonomy" id="284812"/>
    <lineage>
        <taxon>Eukaryota</taxon>
        <taxon>Fungi</taxon>
        <taxon>Dikarya</taxon>
        <taxon>Ascomycota</taxon>
        <taxon>Taphrinomycotina</taxon>
        <taxon>Schizosaccharomycetes</taxon>
        <taxon>Schizosaccharomycetales</taxon>
        <taxon>Schizosaccharomycetaceae</taxon>
        <taxon>Schizosaccharomyces</taxon>
    </lineage>
</organism>
<sequence>MFVGKALQFQSFHSSIDATFWHQLSNYKVEKQKLDASPLTIHGKFNTYSRGNISIVFGEAPSNSNIKDCLAEGTLLNANTPQEFTNADVKKIREEIGEVLLNSIKNGVVSERPNELLRFLIFSYADIKAYKYHYWCLFPSFKETPHWIVKDLSPAESLIPSGPILSQIREFLSTADYYQRPFFLLIKSTLDEWTIAPLKELSHCVDKSLQFYLVAEDSVQLAEYPSWPVRNILAFAFIKFKLKVINLFLYRDGINSDTLSKSILIKVEADKDMILEAPLSIVGWERNGKGVLGPRVVNLSTVLDPFVLSESASTLNLSLMRWRLVPQLDLDRIQNSKCLLLGAGTLGCGVARNLLSWGVRHVTFVDYSTVSYSNPVRQSLFTFEDCKRKLPKAECAAQRLKEIYPNMFSTGYNISIPMLGHPIYEAGIEKTMHDYETLENLISTHDAIFLLTDTRESRWLPTVISTAMDKLLINSALGFDSWLVMRHGSVLQKENRLGCYFCNDIFAPSNSLVDRTLDQTCTVTRSGCANIATAIAVELFVSLLQHPNGHAAPVLNEDQTVLGELPHQIRGFLHNFSLMKISGMAYPQCSACSECIINEWNREKWMFVLRAINEPDYVEELCGLREVQALGEIAGTMEEWISDKESVIL</sequence>
<proteinExistence type="inferred from homology"/>
<gene>
    <name type="primary">atg7</name>
    <name type="ORF">SPBC6B1.05c</name>
</gene>
<reference key="1">
    <citation type="journal article" date="2002" name="Nature">
        <title>The genome sequence of Schizosaccharomyces pombe.</title>
        <authorList>
            <person name="Wood V."/>
            <person name="Gwilliam R."/>
            <person name="Rajandream M.A."/>
            <person name="Lyne M.H."/>
            <person name="Lyne R."/>
            <person name="Stewart A."/>
            <person name="Sgouros J.G."/>
            <person name="Peat N."/>
            <person name="Hayles J."/>
            <person name="Baker S.G."/>
            <person name="Basham D."/>
            <person name="Bowman S."/>
            <person name="Brooks K."/>
            <person name="Brown D."/>
            <person name="Brown S."/>
            <person name="Chillingworth T."/>
            <person name="Churcher C.M."/>
            <person name="Collins M."/>
            <person name="Connor R."/>
            <person name="Cronin A."/>
            <person name="Davis P."/>
            <person name="Feltwell T."/>
            <person name="Fraser A."/>
            <person name="Gentles S."/>
            <person name="Goble A."/>
            <person name="Hamlin N."/>
            <person name="Harris D.E."/>
            <person name="Hidalgo J."/>
            <person name="Hodgson G."/>
            <person name="Holroyd S."/>
            <person name="Hornsby T."/>
            <person name="Howarth S."/>
            <person name="Huckle E.J."/>
            <person name="Hunt S."/>
            <person name="Jagels K."/>
            <person name="James K.D."/>
            <person name="Jones L."/>
            <person name="Jones M."/>
            <person name="Leather S."/>
            <person name="McDonald S."/>
            <person name="McLean J."/>
            <person name="Mooney P."/>
            <person name="Moule S."/>
            <person name="Mungall K.L."/>
            <person name="Murphy L.D."/>
            <person name="Niblett D."/>
            <person name="Odell C."/>
            <person name="Oliver K."/>
            <person name="O'Neil S."/>
            <person name="Pearson D."/>
            <person name="Quail M.A."/>
            <person name="Rabbinowitsch E."/>
            <person name="Rutherford K.M."/>
            <person name="Rutter S."/>
            <person name="Saunders D."/>
            <person name="Seeger K."/>
            <person name="Sharp S."/>
            <person name="Skelton J."/>
            <person name="Simmonds M.N."/>
            <person name="Squares R."/>
            <person name="Squares S."/>
            <person name="Stevens K."/>
            <person name="Taylor K."/>
            <person name="Taylor R.G."/>
            <person name="Tivey A."/>
            <person name="Walsh S.V."/>
            <person name="Warren T."/>
            <person name="Whitehead S."/>
            <person name="Woodward J.R."/>
            <person name="Volckaert G."/>
            <person name="Aert R."/>
            <person name="Robben J."/>
            <person name="Grymonprez B."/>
            <person name="Weltjens I."/>
            <person name="Vanstreels E."/>
            <person name="Rieger M."/>
            <person name="Schaefer M."/>
            <person name="Mueller-Auer S."/>
            <person name="Gabel C."/>
            <person name="Fuchs M."/>
            <person name="Duesterhoeft A."/>
            <person name="Fritzc C."/>
            <person name="Holzer E."/>
            <person name="Moestl D."/>
            <person name="Hilbert H."/>
            <person name="Borzym K."/>
            <person name="Langer I."/>
            <person name="Beck A."/>
            <person name="Lehrach H."/>
            <person name="Reinhardt R."/>
            <person name="Pohl T.M."/>
            <person name="Eger P."/>
            <person name="Zimmermann W."/>
            <person name="Wedler H."/>
            <person name="Wambutt R."/>
            <person name="Purnelle B."/>
            <person name="Goffeau A."/>
            <person name="Cadieu E."/>
            <person name="Dreano S."/>
            <person name="Gloux S."/>
            <person name="Lelaure V."/>
            <person name="Mottier S."/>
            <person name="Galibert F."/>
            <person name="Aves S.J."/>
            <person name="Xiang Z."/>
            <person name="Hunt C."/>
            <person name="Moore K."/>
            <person name="Hurst S.M."/>
            <person name="Lucas M."/>
            <person name="Rochet M."/>
            <person name="Gaillardin C."/>
            <person name="Tallada V.A."/>
            <person name="Garzon A."/>
            <person name="Thode G."/>
            <person name="Daga R.R."/>
            <person name="Cruzado L."/>
            <person name="Jimenez J."/>
            <person name="Sanchez M."/>
            <person name="del Rey F."/>
            <person name="Benito J."/>
            <person name="Dominguez A."/>
            <person name="Revuelta J.L."/>
            <person name="Moreno S."/>
            <person name="Armstrong J."/>
            <person name="Forsburg S.L."/>
            <person name="Cerutti L."/>
            <person name="Lowe T."/>
            <person name="McCombie W.R."/>
            <person name="Paulsen I."/>
            <person name="Potashkin J."/>
            <person name="Shpakovski G.V."/>
            <person name="Ussery D."/>
            <person name="Barrell B.G."/>
            <person name="Nurse P."/>
        </authorList>
    </citation>
    <scope>NUCLEOTIDE SEQUENCE [LARGE SCALE GENOMIC DNA]</scope>
    <source>
        <strain>972 / ATCC 24843</strain>
    </source>
</reference>
<reference key="2">
    <citation type="journal article" date="2006" name="Nat. Biotechnol.">
        <title>ORFeome cloning and global analysis of protein localization in the fission yeast Schizosaccharomyces pombe.</title>
        <authorList>
            <person name="Matsuyama A."/>
            <person name="Arai R."/>
            <person name="Yashiroda Y."/>
            <person name="Shirai A."/>
            <person name="Kamata A."/>
            <person name="Sekido S."/>
            <person name="Kobayashi Y."/>
            <person name="Hashimoto A."/>
            <person name="Hamamoto M."/>
            <person name="Hiraoka Y."/>
            <person name="Horinouchi S."/>
            <person name="Yoshida M."/>
        </authorList>
    </citation>
    <scope>SUBCELLULAR LOCATION [LARGE SCALE ANALYSIS]</scope>
</reference>
<reference key="3">
    <citation type="journal article" date="2009" name="Microbiology">
        <title>Autophagy-deficient Schizosaccharomyces pombe mutants undergo partial sporulation during nitrogen starvation.</title>
        <authorList>
            <person name="Mukaiyama H."/>
            <person name="Kajiwara S."/>
            <person name="Hosomi A."/>
            <person name="Giga-Hama Y."/>
            <person name="Tanaka N."/>
            <person name="Nakamura T."/>
            <person name="Takegawa K."/>
        </authorList>
    </citation>
    <scope>FUNCTION</scope>
</reference>
<reference key="4">
    <citation type="journal article" date="2013" name="PLoS Genet.">
        <title>Global analysis of fission yeast mating genes reveals new autophagy factors.</title>
        <authorList>
            <person name="Sun L.L."/>
            <person name="Li M."/>
            <person name="Suo F."/>
            <person name="Liu X.M."/>
            <person name="Shen E.Z."/>
            <person name="Yang B."/>
            <person name="Dong M.Q."/>
            <person name="He W.Z."/>
            <person name="Du L.L."/>
        </authorList>
    </citation>
    <scope>DISRUPTION PHENOTYPE</scope>
</reference>
<reference key="5">
    <citation type="journal article" date="2020" name="Elife">
        <title>Atg43 tethers isolation membranes to mitochondria to promote starvation-induced mitophagy in fission yeast.</title>
        <authorList>
            <person name="Fukuda T."/>
            <person name="Ebi Y."/>
            <person name="Saigusa T."/>
            <person name="Furukawa K."/>
            <person name="Yamashita S.I."/>
            <person name="Inoue K."/>
            <person name="Kobayashi D."/>
            <person name="Yoshida Y."/>
            <person name="Kanki T."/>
        </authorList>
    </citation>
    <scope>DISRUPTION PHENOTYPE</scope>
</reference>
<keyword id="KW-0072">Autophagy</keyword>
<keyword id="KW-0963">Cytoplasm</keyword>
<keyword id="KW-0472">Membrane</keyword>
<keyword id="KW-0539">Nucleus</keyword>
<keyword id="KW-0653">Protein transport</keyword>
<keyword id="KW-1185">Reference proteome</keyword>
<keyword id="KW-0813">Transport</keyword>
<keyword id="KW-0833">Ubl conjugation pathway</keyword>
<name>ATG7_SCHPO</name>